<reference key="1">
    <citation type="journal article" date="2004" name="Cancer Res.">
        <title>Expression of a novel human gene, human wings apart-like (hWAPL), is associated with cervical carcinogenesis and tumor progression.</title>
        <authorList>
            <person name="Oikawa K."/>
            <person name="Ohbayashi T."/>
            <person name="Kiyono T."/>
            <person name="Nishi H."/>
            <person name="Isaka K."/>
            <person name="Umezawa A."/>
            <person name="Kuroda M."/>
            <person name="Mukai K."/>
        </authorList>
    </citation>
    <scope>NUCLEOTIDE SEQUENCE [MRNA] (ISOFORM 1)</scope>
    <scope>FUNCTION</scope>
    <scope>TISSUE SPECIFICITY</scope>
</reference>
<reference key="2">
    <citation type="journal article" date="2004" name="Exp. Cell Res.">
        <title>Identification and cloning of a novel chromatin-associated protein partner of Epstein-Barr nuclear protein 2.</title>
        <authorList>
            <person name="Kwiatkowski B.A."/>
            <person name="Ragoczy T."/>
            <person name="Ehly J."/>
            <person name="Schubach W.H."/>
        </authorList>
    </citation>
    <scope>NUCLEOTIDE SEQUENCE [MRNA] (ISOFORM 2)</scope>
    <scope>INTERACTION WITH EPSTEIN-BARR VIRUS EBNA2 (MICROBIAL INFECTION)</scope>
    <scope>SUBCELLULAR LOCATION</scope>
    <scope>TISSUE SPECIFICITY</scope>
</reference>
<reference key="3">
    <citation type="journal article" date="1996" name="DNA Res.">
        <title>Prediction of the coding sequences of unidentified human genes. VI. The coding sequences of 80 new genes (KIAA0201-KIAA0280) deduced by analysis of cDNA clones from cell line KG-1 and brain.</title>
        <authorList>
            <person name="Nagase T."/>
            <person name="Seki N."/>
            <person name="Ishikawa K."/>
            <person name="Ohira M."/>
            <person name="Kawarabayasi Y."/>
            <person name="Ohara O."/>
            <person name="Tanaka A."/>
            <person name="Kotani H."/>
            <person name="Miyajima N."/>
            <person name="Nomura N."/>
        </authorList>
    </citation>
    <scope>NUCLEOTIDE SEQUENCE [LARGE SCALE MRNA] (ISOFORM 3)</scope>
    <source>
        <tissue>Bone marrow</tissue>
    </source>
</reference>
<reference key="4">
    <citation type="journal article" date="2004" name="Nature">
        <title>The DNA sequence and comparative analysis of human chromosome 10.</title>
        <authorList>
            <person name="Deloukas P."/>
            <person name="Earthrowl M.E."/>
            <person name="Grafham D.V."/>
            <person name="Rubenfield M."/>
            <person name="French L."/>
            <person name="Steward C.A."/>
            <person name="Sims S.K."/>
            <person name="Jones M.C."/>
            <person name="Searle S."/>
            <person name="Scott C."/>
            <person name="Howe K."/>
            <person name="Hunt S.E."/>
            <person name="Andrews T.D."/>
            <person name="Gilbert J.G.R."/>
            <person name="Swarbreck D."/>
            <person name="Ashurst J.L."/>
            <person name="Taylor A."/>
            <person name="Battles J."/>
            <person name="Bird C.P."/>
            <person name="Ainscough R."/>
            <person name="Almeida J.P."/>
            <person name="Ashwell R.I.S."/>
            <person name="Ambrose K.D."/>
            <person name="Babbage A.K."/>
            <person name="Bagguley C.L."/>
            <person name="Bailey J."/>
            <person name="Banerjee R."/>
            <person name="Bates K."/>
            <person name="Beasley H."/>
            <person name="Bray-Allen S."/>
            <person name="Brown A.J."/>
            <person name="Brown J.Y."/>
            <person name="Burford D.C."/>
            <person name="Burrill W."/>
            <person name="Burton J."/>
            <person name="Cahill P."/>
            <person name="Camire D."/>
            <person name="Carter N.P."/>
            <person name="Chapman J.C."/>
            <person name="Clark S.Y."/>
            <person name="Clarke G."/>
            <person name="Clee C.M."/>
            <person name="Clegg S."/>
            <person name="Corby N."/>
            <person name="Coulson A."/>
            <person name="Dhami P."/>
            <person name="Dutta I."/>
            <person name="Dunn M."/>
            <person name="Faulkner L."/>
            <person name="Frankish A."/>
            <person name="Frankland J.A."/>
            <person name="Garner P."/>
            <person name="Garnett J."/>
            <person name="Gribble S."/>
            <person name="Griffiths C."/>
            <person name="Grocock R."/>
            <person name="Gustafson E."/>
            <person name="Hammond S."/>
            <person name="Harley J.L."/>
            <person name="Hart E."/>
            <person name="Heath P.D."/>
            <person name="Ho T.P."/>
            <person name="Hopkins B."/>
            <person name="Horne J."/>
            <person name="Howden P.J."/>
            <person name="Huckle E."/>
            <person name="Hynds C."/>
            <person name="Johnson C."/>
            <person name="Johnson D."/>
            <person name="Kana A."/>
            <person name="Kay M."/>
            <person name="Kimberley A.M."/>
            <person name="Kershaw J.K."/>
            <person name="Kokkinaki M."/>
            <person name="Laird G.K."/>
            <person name="Lawlor S."/>
            <person name="Lee H.M."/>
            <person name="Leongamornlert D.A."/>
            <person name="Laird G."/>
            <person name="Lloyd C."/>
            <person name="Lloyd D.M."/>
            <person name="Loveland J."/>
            <person name="Lovell J."/>
            <person name="McLaren S."/>
            <person name="McLay K.E."/>
            <person name="McMurray A."/>
            <person name="Mashreghi-Mohammadi M."/>
            <person name="Matthews L."/>
            <person name="Milne S."/>
            <person name="Nickerson T."/>
            <person name="Nguyen M."/>
            <person name="Overton-Larty E."/>
            <person name="Palmer S.A."/>
            <person name="Pearce A.V."/>
            <person name="Peck A.I."/>
            <person name="Pelan S."/>
            <person name="Phillimore B."/>
            <person name="Porter K."/>
            <person name="Rice C.M."/>
            <person name="Rogosin A."/>
            <person name="Ross M.T."/>
            <person name="Sarafidou T."/>
            <person name="Sehra H.K."/>
            <person name="Shownkeen R."/>
            <person name="Skuce C.D."/>
            <person name="Smith M."/>
            <person name="Standring L."/>
            <person name="Sycamore N."/>
            <person name="Tester J."/>
            <person name="Thorpe A."/>
            <person name="Torcasso W."/>
            <person name="Tracey A."/>
            <person name="Tromans A."/>
            <person name="Tsolas J."/>
            <person name="Wall M."/>
            <person name="Walsh J."/>
            <person name="Wang H."/>
            <person name="Weinstock K."/>
            <person name="West A.P."/>
            <person name="Willey D.L."/>
            <person name="Whitehead S.L."/>
            <person name="Wilming L."/>
            <person name="Wray P.W."/>
            <person name="Young L."/>
            <person name="Chen Y."/>
            <person name="Lovering R.C."/>
            <person name="Moschonas N.K."/>
            <person name="Siebert R."/>
            <person name="Fechtel K."/>
            <person name="Bentley D."/>
            <person name="Durbin R.M."/>
            <person name="Hubbard T."/>
            <person name="Doucette-Stamm L."/>
            <person name="Beck S."/>
            <person name="Smith D.R."/>
            <person name="Rogers J."/>
        </authorList>
    </citation>
    <scope>NUCLEOTIDE SEQUENCE [LARGE SCALE GENOMIC DNA]</scope>
</reference>
<reference key="5">
    <citation type="submission" date="2005-09" db="EMBL/GenBank/DDBJ databases">
        <authorList>
            <person name="Mural R.J."/>
            <person name="Istrail S."/>
            <person name="Sutton G.G."/>
            <person name="Florea L."/>
            <person name="Halpern A.L."/>
            <person name="Mobarry C.M."/>
            <person name="Lippert R."/>
            <person name="Walenz B."/>
            <person name="Shatkay H."/>
            <person name="Dew I."/>
            <person name="Miller J.R."/>
            <person name="Flanigan M.J."/>
            <person name="Edwards N.J."/>
            <person name="Bolanos R."/>
            <person name="Fasulo D."/>
            <person name="Halldorsson B.V."/>
            <person name="Hannenhalli S."/>
            <person name="Turner R."/>
            <person name="Yooseph S."/>
            <person name="Lu F."/>
            <person name="Nusskern D.R."/>
            <person name="Shue B.C."/>
            <person name="Zheng X.H."/>
            <person name="Zhong F."/>
            <person name="Delcher A.L."/>
            <person name="Huson D.H."/>
            <person name="Kravitz S.A."/>
            <person name="Mouchard L."/>
            <person name="Reinert K."/>
            <person name="Remington K.A."/>
            <person name="Clark A.G."/>
            <person name="Waterman M.S."/>
            <person name="Eichler E.E."/>
            <person name="Adams M.D."/>
            <person name="Hunkapiller M.W."/>
            <person name="Myers E.W."/>
            <person name="Venter J.C."/>
        </authorList>
    </citation>
    <scope>NUCLEOTIDE SEQUENCE [LARGE SCALE GENOMIC DNA]</scope>
</reference>
<reference key="6">
    <citation type="journal article" date="2004" name="Genome Res.">
        <title>The status, quality, and expansion of the NIH full-length cDNA project: the Mammalian Gene Collection (MGC).</title>
        <authorList>
            <consortium name="The MGC Project Team"/>
        </authorList>
    </citation>
    <scope>NUCLEOTIDE SEQUENCE [LARGE SCALE MRNA] (ISOFORM 1)</scope>
</reference>
<reference key="7">
    <citation type="journal article" date="2006" name="Cell">
        <title>Global, in vivo, and site-specific phosphorylation dynamics in signaling networks.</title>
        <authorList>
            <person name="Olsen J.V."/>
            <person name="Blagoev B."/>
            <person name="Gnad F."/>
            <person name="Macek B."/>
            <person name="Kumar C."/>
            <person name="Mortensen P."/>
            <person name="Mann M."/>
        </authorList>
    </citation>
    <scope>PHOSPHORYLATION [LARGE SCALE ANALYSIS] AT SER-226</scope>
    <scope>IDENTIFICATION BY MASS SPECTROMETRY [LARGE SCALE ANALYSIS]</scope>
    <source>
        <tissue>Cervix carcinoma</tissue>
    </source>
</reference>
<reference key="8">
    <citation type="journal article" date="2006" name="Cell">
        <title>Wapl controls the dynamic association of cohesin with chromatin.</title>
        <authorList>
            <person name="Kueng S."/>
            <person name="Hegemann B."/>
            <person name="Peters B.H."/>
            <person name="Lipp J.J."/>
            <person name="Schleiffer A."/>
            <person name="Mechtler K."/>
            <person name="Peters J.M."/>
        </authorList>
    </citation>
    <scope>IDENTIFICATION BY MASS SPECTROMETRY</scope>
    <scope>FUNCTION</scope>
    <scope>INTERACTION WITH THE COHESIN COMPLEX AND PDS5A</scope>
    <scope>SUBCELLULAR LOCATION</scope>
</reference>
<reference key="9">
    <citation type="journal article" date="2006" name="Curr. Biol.">
        <title>Human Wapl is a cohesin-binding protein that promotes sister-chromatid resolution in mitotic prophase.</title>
        <authorList>
            <person name="Gandhi R."/>
            <person name="Gillespie P.J."/>
            <person name="Hirano T."/>
        </authorList>
    </citation>
    <scope>FUNCTION</scope>
    <scope>INTERACTION WITH THE COHESIN COMPLEX</scope>
    <scope>SUBCELLULAR LOCATION</scope>
</reference>
<reference key="10">
    <citation type="journal article" date="2008" name="Mol. Cell">
        <title>Kinase-selective enrichment enables quantitative phosphoproteomics of the kinome across the cell cycle.</title>
        <authorList>
            <person name="Daub H."/>
            <person name="Olsen J.V."/>
            <person name="Bairlein M."/>
            <person name="Gnad F."/>
            <person name="Oppermann F.S."/>
            <person name="Korner R."/>
            <person name="Greff Z."/>
            <person name="Keri G."/>
            <person name="Stemmann O."/>
            <person name="Mann M."/>
        </authorList>
    </citation>
    <scope>PHOSPHORYLATION [LARGE SCALE ANALYSIS] AT SER-77 AND SER-226</scope>
    <scope>IDENTIFICATION BY MASS SPECTROMETRY [LARGE SCALE ANALYSIS]</scope>
    <source>
        <tissue>Cervix carcinoma</tissue>
    </source>
</reference>
<reference key="11">
    <citation type="journal article" date="2008" name="Proc. Natl. Acad. Sci. U.S.A.">
        <title>A quantitative atlas of mitotic phosphorylation.</title>
        <authorList>
            <person name="Dephoure N."/>
            <person name="Zhou C."/>
            <person name="Villen J."/>
            <person name="Beausoleil S.A."/>
            <person name="Bakalarski C.E."/>
            <person name="Elledge S.J."/>
            <person name="Gygi S.P."/>
        </authorList>
    </citation>
    <scope>PHOSPHORYLATION [LARGE SCALE ANALYSIS] AT SER-77; SER-221; SER-223; SER-226; SER-380; SER-459; SER-461 AND SER-904</scope>
    <scope>IDENTIFICATION BY MASS SPECTROMETRY [LARGE SCALE ANALYSIS]</scope>
    <source>
        <tissue>Cervix carcinoma</tissue>
    </source>
</reference>
<reference key="12">
    <citation type="journal article" date="2009" name="Anal. Chem.">
        <title>Lys-N and trypsin cover complementary parts of the phosphoproteome in a refined SCX-based approach.</title>
        <authorList>
            <person name="Gauci S."/>
            <person name="Helbig A.O."/>
            <person name="Slijper M."/>
            <person name="Krijgsveld J."/>
            <person name="Heck A.J."/>
            <person name="Mohammed S."/>
        </authorList>
    </citation>
    <scope>IDENTIFICATION BY MASS SPECTROMETRY [LARGE SCALE ANALYSIS]</scope>
</reference>
<reference key="13">
    <citation type="journal article" date="2009" name="Genes Dev.">
        <title>Releasing cohesin from chromosome arms in early mitosis: opposing actions of Wapl-Pds5 and Sgo1.</title>
        <authorList>
            <person name="Shintomi K."/>
            <person name="Hirano T."/>
        </authorList>
    </citation>
    <scope>FUNCTION</scope>
    <scope>INTERACTION WITH PDS5B AND RAD21</scope>
    <scope>MUTAGENESIS OF 73-PHE--PHE-75; 429-PHE--PHE-431 AND 453-PHE--PHE-455</scope>
    <scope>FGF MOTIFS</scope>
</reference>
<reference key="14">
    <citation type="journal article" date="2009" name="Mol. Cell. Proteomics">
        <title>Large-scale proteomics analysis of the human kinome.</title>
        <authorList>
            <person name="Oppermann F.S."/>
            <person name="Gnad F."/>
            <person name="Olsen J.V."/>
            <person name="Hornberger R."/>
            <person name="Greff Z."/>
            <person name="Keri G."/>
            <person name="Mann M."/>
            <person name="Daub H."/>
        </authorList>
    </citation>
    <scope>PHOSPHORYLATION [LARGE SCALE ANALYSIS] AT SER-77</scope>
    <scope>IDENTIFICATION BY MASS SPECTROMETRY [LARGE SCALE ANALYSIS]</scope>
</reference>
<reference key="15">
    <citation type="journal article" date="2009" name="Nature">
        <title>Cohesin acetylation speeds the replication fork.</title>
        <authorList>
            <person name="Terret M.E."/>
            <person name="Sherwood R."/>
            <person name="Rahman S."/>
            <person name="Qin J."/>
            <person name="Jallepalli P.V."/>
        </authorList>
    </citation>
    <scope>FUNCTION</scope>
    <scope>INTERACTION WITH SMC3</scope>
</reference>
<reference key="16">
    <citation type="journal article" date="2009" name="Sci. Signal.">
        <title>Quantitative phosphoproteomic analysis of T cell receptor signaling reveals system-wide modulation of protein-protein interactions.</title>
        <authorList>
            <person name="Mayya V."/>
            <person name="Lundgren D.H."/>
            <person name="Hwang S.-I."/>
            <person name="Rezaul K."/>
            <person name="Wu L."/>
            <person name="Eng J.K."/>
            <person name="Rodionov V."/>
            <person name="Han D.K."/>
        </authorList>
    </citation>
    <scope>PHOSPHORYLATION [LARGE SCALE ANALYSIS] AT SER-77 AND SER-380</scope>
    <scope>IDENTIFICATION BY MASS SPECTROMETRY [LARGE SCALE ANALYSIS]</scope>
    <source>
        <tissue>Leukemic T-cell</tissue>
    </source>
</reference>
<reference key="17">
    <citation type="journal article" date="2009" name="Science">
        <title>Lysine acetylation targets protein complexes and co-regulates major cellular functions.</title>
        <authorList>
            <person name="Choudhary C."/>
            <person name="Kumar C."/>
            <person name="Gnad F."/>
            <person name="Nielsen M.L."/>
            <person name="Rehman M."/>
            <person name="Walther T.C."/>
            <person name="Olsen J.V."/>
            <person name="Mann M."/>
        </authorList>
    </citation>
    <scope>ACETYLATION [LARGE SCALE ANALYSIS] AT LYS-168</scope>
    <scope>IDENTIFICATION BY MASS SPECTROMETRY [LARGE SCALE ANALYSIS]</scope>
</reference>
<reference key="18">
    <citation type="journal article" date="2010" name="Cell">
        <title>Sororin mediates sister chromatid cohesion by antagonizing wapl.</title>
        <authorList>
            <person name="Nishiyama T."/>
            <person name="Ladurner R."/>
            <person name="Schmitz J."/>
            <person name="Kreidl E."/>
            <person name="Schleiffer A."/>
            <person name="Bhaskara V."/>
            <person name="Bando M."/>
            <person name="Shirahige K."/>
            <person name="Hyman A.A."/>
            <person name="Mechtler K."/>
            <person name="Peters J.M."/>
        </authorList>
    </citation>
    <scope>FUNCTION</scope>
    <scope>INTERACTION WITH PDS5A</scope>
</reference>
<reference key="19">
    <citation type="journal article" date="2010" name="Sci. Signal.">
        <title>Quantitative phosphoproteomics reveals widespread full phosphorylation site occupancy during mitosis.</title>
        <authorList>
            <person name="Olsen J.V."/>
            <person name="Vermeulen M."/>
            <person name="Santamaria A."/>
            <person name="Kumar C."/>
            <person name="Miller M.L."/>
            <person name="Jensen L.J."/>
            <person name="Gnad F."/>
            <person name="Cox J."/>
            <person name="Jensen T.S."/>
            <person name="Nigg E.A."/>
            <person name="Brunak S."/>
            <person name="Mann M."/>
        </authorList>
    </citation>
    <scope>PHOSPHORYLATION [LARGE SCALE ANALYSIS] AT SER-77; SER-221 AND SER-226</scope>
    <scope>IDENTIFICATION BY MASS SPECTROMETRY [LARGE SCALE ANALYSIS]</scope>
    <source>
        <tissue>Cervix carcinoma</tissue>
    </source>
</reference>
<reference key="20">
    <citation type="journal article" date="2011" name="BMC Syst. Biol.">
        <title>Initial characterization of the human central proteome.</title>
        <authorList>
            <person name="Burkard T.R."/>
            <person name="Planyavsky M."/>
            <person name="Kaupe I."/>
            <person name="Breitwieser F.P."/>
            <person name="Buerckstuemmer T."/>
            <person name="Bennett K.L."/>
            <person name="Superti-Furga G."/>
            <person name="Colinge J."/>
        </authorList>
    </citation>
    <scope>IDENTIFICATION BY MASS SPECTROMETRY [LARGE SCALE ANALYSIS]</scope>
</reference>
<reference key="21">
    <citation type="journal article" date="2011" name="Sci. Signal.">
        <title>System-wide temporal characterization of the proteome and phosphoproteome of human embryonic stem cell differentiation.</title>
        <authorList>
            <person name="Rigbolt K.T."/>
            <person name="Prokhorova T.A."/>
            <person name="Akimov V."/>
            <person name="Henningsen J."/>
            <person name="Johansen P.T."/>
            <person name="Kratchmarova I."/>
            <person name="Kassem M."/>
            <person name="Mann M."/>
            <person name="Olsen J.V."/>
            <person name="Blagoev B."/>
        </authorList>
    </citation>
    <scope>PHOSPHORYLATION [LARGE SCALE ANALYSIS] AT SER-77; SER-221 AND SER-226</scope>
    <scope>IDENTIFICATION BY MASS SPECTROMETRY [LARGE SCALE ANALYSIS]</scope>
</reference>
<reference key="22">
    <citation type="journal article" date="2013" name="J. Proteome Res.">
        <title>Toward a comprehensive characterization of a human cancer cell phosphoproteome.</title>
        <authorList>
            <person name="Zhou H."/>
            <person name="Di Palma S."/>
            <person name="Preisinger C."/>
            <person name="Peng M."/>
            <person name="Polat A.N."/>
            <person name="Heck A.J."/>
            <person name="Mohammed S."/>
        </authorList>
    </citation>
    <scope>PHOSPHORYLATION [LARGE SCALE ANALYSIS] AT SER-77; SER-221; SER-226; SER-347; SER-380 AND SER-443</scope>
    <scope>IDENTIFICATION BY MASS SPECTROMETRY [LARGE SCALE ANALYSIS]</scope>
    <source>
        <tissue>Cervix carcinoma</tissue>
        <tissue>Erythroleukemia</tissue>
    </source>
</reference>
<reference key="23">
    <citation type="journal article" date="2014" name="J. Proteomics">
        <title>An enzyme assisted RP-RPLC approach for in-depth analysis of human liver phosphoproteome.</title>
        <authorList>
            <person name="Bian Y."/>
            <person name="Song C."/>
            <person name="Cheng K."/>
            <person name="Dong M."/>
            <person name="Wang F."/>
            <person name="Huang J."/>
            <person name="Sun D."/>
            <person name="Wang L."/>
            <person name="Ye M."/>
            <person name="Zou H."/>
        </authorList>
    </citation>
    <scope>PHOSPHORYLATION [LARGE SCALE ANALYSIS] AT SER-77; SER-221 AND SER-223</scope>
    <scope>IDENTIFICATION BY MASS SPECTROMETRY [LARGE SCALE ANALYSIS]</scope>
    <source>
        <tissue>Liver</tissue>
    </source>
</reference>
<reference key="24">
    <citation type="journal article" date="2015" name="Curr. Biol.">
        <title>The Deubiquitinase USP37 Regulates Chromosome Cohesion and Mitotic Progression.</title>
        <authorList>
            <person name="Yeh C."/>
            <person name="Coyaud E."/>
            <person name="Bashkurov M."/>
            <person name="van der Lelij P."/>
            <person name="Cheung S.W."/>
            <person name="Peters J.M."/>
            <person name="Raught B."/>
            <person name="Pelletier L."/>
        </authorList>
    </citation>
    <scope>FUNCTION</scope>
    <scope>DEUBIQUITINATION BY USP37</scope>
    <scope>SUBCELLULAR LOCATION</scope>
</reference>
<reference key="25">
    <citation type="journal article" date="2013" name="Proc. Natl. Acad. Sci. U.S.A.">
        <title>Structure of the human cohesin inhibitor Wapl.</title>
        <authorList>
            <person name="Ouyang Z."/>
            <person name="Zheng G."/>
            <person name="Song J."/>
            <person name="Borek D.M."/>
            <person name="Otwinowski Z."/>
            <person name="Brautigam C.A."/>
            <person name="Tomchick D.R."/>
            <person name="Rankin S."/>
            <person name="Yu H."/>
        </authorList>
    </citation>
    <scope>X-RAY CRYSTALLOGRAPHY (2.62 ANGSTROMS) OF 631-1190</scope>
    <scope>FUNCTION</scope>
    <scope>INTERACTION WITH PDS5A; SMC1; SMC3; STAG2 AND CDCA5</scope>
    <scope>SUBUNIT</scope>
    <scope>MUTAGENESIS OF 639-VAL-LYS-640; 656-ASP-ASP-657; GLU-770; GLU-777; GLU-787; THR-790; MET-1116 AND ILE-1120</scope>
</reference>
<reference key="26">
    <citation type="journal article" date="2019" name="Genet. Med.">
        <title>Clinical exome sequencing reveals locus heterogeneity and phenotypic variability of cohesinopathies.</title>
        <authorList>
            <consortium name="DDD Study"/>
            <person name="Yuan B."/>
            <person name="Neira J."/>
            <person name="Pehlivan D."/>
            <person name="Santiago-Sim T."/>
            <person name="Song X."/>
            <person name="Rosenfeld J."/>
            <person name="Posey J.E."/>
            <person name="Patel V."/>
            <person name="Jin W."/>
            <person name="Adam M.P."/>
            <person name="Baple E.L."/>
            <person name="Dean J."/>
            <person name="Fong C.T."/>
            <person name="Hickey S.E."/>
            <person name="Hudgins L."/>
            <person name="Leon E."/>
            <person name="Madan-Khetarpal S."/>
            <person name="Rawlins L."/>
            <person name="Rustad C.F."/>
            <person name="Stray-Pedersen A."/>
            <person name="Tveten K."/>
            <person name="Wenger O."/>
            <person name="Diaz J."/>
            <person name="Jenkins L."/>
            <person name="Martin L."/>
            <person name="McGuire M."/>
            <person name="Pietryga M."/>
            <person name="Ramsdell L."/>
            <person name="Slattery L."/>
            <person name="Abid F."/>
            <person name="Bertuch A.A."/>
            <person name="Grange D."/>
            <person name="Immken L."/>
            <person name="Schaaf C.P."/>
            <person name="Van Esch H."/>
            <person name="Bi W."/>
            <person name="Cheung S.W."/>
            <person name="Breman A.M."/>
            <person name="Smith J.L."/>
            <person name="Shaw C."/>
            <person name="Crosby A.H."/>
            <person name="Eng C."/>
            <person name="Yang Y."/>
            <person name="Lupski J.R."/>
            <person name="Xiao R."/>
            <person name="Liu P."/>
        </authorList>
    </citation>
    <scope>VARIANT HIS-731</scope>
</reference>
<proteinExistence type="evidence at protein level"/>
<keyword id="KW-0002">3D-structure</keyword>
<keyword id="KW-0007">Acetylation</keyword>
<keyword id="KW-0025">Alternative splicing</keyword>
<keyword id="KW-0131">Cell cycle</keyword>
<keyword id="KW-0132">Cell division</keyword>
<keyword id="KW-0158">Chromosome</keyword>
<keyword id="KW-0175">Coiled coil</keyword>
<keyword id="KW-0963">Cytoplasm</keyword>
<keyword id="KW-0945">Host-virus interaction</keyword>
<keyword id="KW-0498">Mitosis</keyword>
<keyword id="KW-0539">Nucleus</keyword>
<keyword id="KW-0597">Phosphoprotein</keyword>
<keyword id="KW-1267">Proteomics identification</keyword>
<keyword id="KW-1185">Reference proteome</keyword>
<dbReference type="EMBL" id="AB065003">
    <property type="protein sequence ID" value="BAC78631.1"/>
    <property type="molecule type" value="mRNA"/>
</dbReference>
<dbReference type="EMBL" id="AF479418">
    <property type="protein sequence ID" value="AAO14651.1"/>
    <property type="molecule type" value="mRNA"/>
</dbReference>
<dbReference type="EMBL" id="D87450">
    <property type="protein sequence ID" value="BAA13391.1"/>
    <property type="status" value="ALT_INIT"/>
    <property type="molecule type" value="mRNA"/>
</dbReference>
<dbReference type="EMBL" id="AL731569">
    <property type="status" value="NOT_ANNOTATED_CDS"/>
    <property type="molecule type" value="Genomic_DNA"/>
</dbReference>
<dbReference type="EMBL" id="AL844892">
    <property type="status" value="NOT_ANNOTATED_CDS"/>
    <property type="molecule type" value="Genomic_DNA"/>
</dbReference>
<dbReference type="EMBL" id="CH471142">
    <property type="protein sequence ID" value="EAW80336.1"/>
    <property type="molecule type" value="Genomic_DNA"/>
</dbReference>
<dbReference type="EMBL" id="BC150269">
    <property type="protein sequence ID" value="AAI50270.1"/>
    <property type="molecule type" value="mRNA"/>
</dbReference>
<dbReference type="CCDS" id="CCDS7375.1">
    <molecule id="Q7Z5K2-1"/>
</dbReference>
<dbReference type="RefSeq" id="NP_001305257.1">
    <property type="nucleotide sequence ID" value="NM_001318328.1"/>
</dbReference>
<dbReference type="RefSeq" id="NP_055860.1">
    <molecule id="Q7Z5K2-1"/>
    <property type="nucleotide sequence ID" value="NM_015045.5"/>
</dbReference>
<dbReference type="PDB" id="4K6J">
    <property type="method" value="X-ray"/>
    <property type="resolution" value="2.62 A"/>
    <property type="chains" value="A/B=631-1190"/>
</dbReference>
<dbReference type="PDB" id="5HDT">
    <property type="method" value="X-ray"/>
    <property type="resolution" value="2.71 A"/>
    <property type="chains" value="E=1-33"/>
</dbReference>
<dbReference type="PDBsum" id="4K6J"/>
<dbReference type="PDBsum" id="5HDT"/>
<dbReference type="SMR" id="Q7Z5K2"/>
<dbReference type="BioGRID" id="116698">
    <property type="interactions" value="182"/>
</dbReference>
<dbReference type="DIP" id="DIP-31176N"/>
<dbReference type="FunCoup" id="Q7Z5K2">
    <property type="interactions" value="3302"/>
</dbReference>
<dbReference type="IntAct" id="Q7Z5K2">
    <property type="interactions" value="84"/>
</dbReference>
<dbReference type="MINT" id="Q7Z5K2"/>
<dbReference type="STRING" id="9606.ENSP00000298767"/>
<dbReference type="GlyGen" id="Q7Z5K2">
    <property type="glycosylation" value="3 sites, 1 N-linked glycan (1 site), 1 O-linked glycan (2 sites)"/>
</dbReference>
<dbReference type="iPTMnet" id="Q7Z5K2"/>
<dbReference type="MetOSite" id="Q7Z5K2"/>
<dbReference type="PhosphoSitePlus" id="Q7Z5K2"/>
<dbReference type="SwissPalm" id="Q7Z5K2"/>
<dbReference type="BioMuta" id="WAPL"/>
<dbReference type="DMDM" id="74713658"/>
<dbReference type="jPOST" id="Q7Z5K2"/>
<dbReference type="MassIVE" id="Q7Z5K2"/>
<dbReference type="PaxDb" id="9606-ENSP00000298767"/>
<dbReference type="PeptideAtlas" id="Q7Z5K2"/>
<dbReference type="ProteomicsDB" id="69311">
    <molecule id="Q7Z5K2-1"/>
</dbReference>
<dbReference type="ProteomicsDB" id="69312">
    <molecule id="Q7Z5K2-2"/>
</dbReference>
<dbReference type="ProteomicsDB" id="69313">
    <molecule id="Q7Z5K2-3"/>
</dbReference>
<dbReference type="Pumba" id="Q7Z5K2"/>
<dbReference type="Antibodypedia" id="30070">
    <property type="antibodies" value="176 antibodies from 32 providers"/>
</dbReference>
<dbReference type="DNASU" id="23063"/>
<dbReference type="Ensembl" id="ENST00000298767.10">
    <molecule id="Q7Z5K2-1"/>
    <property type="protein sequence ID" value="ENSP00000298767.4"/>
    <property type="gene ID" value="ENSG00000062650.20"/>
</dbReference>
<dbReference type="GeneID" id="23063"/>
<dbReference type="KEGG" id="hsa:23063"/>
<dbReference type="MANE-Select" id="ENST00000298767.10">
    <property type="protein sequence ID" value="ENSP00000298767.4"/>
    <property type="RefSeq nucleotide sequence ID" value="NM_015045.5"/>
    <property type="RefSeq protein sequence ID" value="NP_055860.1"/>
</dbReference>
<dbReference type="UCSC" id="uc001kdo.4">
    <molecule id="Q7Z5K2-1"/>
    <property type="organism name" value="human"/>
</dbReference>
<dbReference type="AGR" id="HGNC:23293"/>
<dbReference type="CTD" id="23063"/>
<dbReference type="DisGeNET" id="23063"/>
<dbReference type="GeneCards" id="WAPL"/>
<dbReference type="HGNC" id="HGNC:23293">
    <property type="gene designation" value="WAPL"/>
</dbReference>
<dbReference type="HPA" id="ENSG00000062650">
    <property type="expression patterns" value="Low tissue specificity"/>
</dbReference>
<dbReference type="MIM" id="610754">
    <property type="type" value="gene"/>
</dbReference>
<dbReference type="neXtProt" id="NX_Q7Z5K2"/>
<dbReference type="OpenTargets" id="ENSG00000062650"/>
<dbReference type="PharmGKB" id="PA134872402"/>
<dbReference type="VEuPathDB" id="HostDB:ENSG00000062650"/>
<dbReference type="eggNOG" id="KOG2152">
    <property type="taxonomic scope" value="Eukaryota"/>
</dbReference>
<dbReference type="GeneTree" id="ENSGT00390000015768"/>
<dbReference type="HOGENOM" id="CLU_006912_0_0_1"/>
<dbReference type="InParanoid" id="Q7Z5K2"/>
<dbReference type="OMA" id="EANDTWN"/>
<dbReference type="OrthoDB" id="78088at2759"/>
<dbReference type="PAN-GO" id="Q7Z5K2">
    <property type="GO annotations" value="2 GO annotations based on evolutionary models"/>
</dbReference>
<dbReference type="PhylomeDB" id="Q7Z5K2"/>
<dbReference type="TreeFam" id="TF323477"/>
<dbReference type="PathwayCommons" id="Q7Z5K2"/>
<dbReference type="Reactome" id="R-HSA-2467813">
    <property type="pathway name" value="Separation of Sister Chromatids"/>
</dbReference>
<dbReference type="Reactome" id="R-HSA-2468052">
    <property type="pathway name" value="Establishment of Sister Chromatid Cohesion"/>
</dbReference>
<dbReference type="Reactome" id="R-HSA-2470946">
    <property type="pathway name" value="Cohesin Loading onto Chromatin"/>
</dbReference>
<dbReference type="Reactome" id="R-HSA-2500257">
    <property type="pathway name" value="Resolution of Sister Chromatid Cohesion"/>
</dbReference>
<dbReference type="SignaLink" id="Q7Z5K2"/>
<dbReference type="SIGNOR" id="Q7Z5K2"/>
<dbReference type="BioGRID-ORCS" id="23063">
    <property type="hits" value="205 hits in 1165 CRISPR screens"/>
</dbReference>
<dbReference type="ChiTaRS" id="WAPL">
    <property type="organism name" value="human"/>
</dbReference>
<dbReference type="EvolutionaryTrace" id="Q7Z5K2"/>
<dbReference type="GeneWiki" id="WAPAL"/>
<dbReference type="GenomeRNAi" id="23063"/>
<dbReference type="Pharos" id="Q7Z5K2">
    <property type="development level" value="Tbio"/>
</dbReference>
<dbReference type="PRO" id="PR:Q7Z5K2"/>
<dbReference type="Proteomes" id="UP000005640">
    <property type="component" value="Chromosome 10"/>
</dbReference>
<dbReference type="RNAct" id="Q7Z5K2">
    <property type="molecule type" value="protein"/>
</dbReference>
<dbReference type="Bgee" id="ENSG00000062650">
    <property type="expression patterns" value="Expressed in secondary oocyte and 207 other cell types or tissues"/>
</dbReference>
<dbReference type="ExpressionAtlas" id="Q7Z5K2">
    <property type="expression patterns" value="baseline and differential"/>
</dbReference>
<dbReference type="GO" id="GO:0000785">
    <property type="term" value="C:chromatin"/>
    <property type="evidence" value="ECO:0000314"/>
    <property type="project" value="UniProtKB"/>
</dbReference>
<dbReference type="GO" id="GO:0005694">
    <property type="term" value="C:chromosome"/>
    <property type="evidence" value="ECO:0000304"/>
    <property type="project" value="Reactome"/>
</dbReference>
<dbReference type="GO" id="GO:0000775">
    <property type="term" value="C:chromosome, centromeric region"/>
    <property type="evidence" value="ECO:0000304"/>
    <property type="project" value="Reactome"/>
</dbReference>
<dbReference type="GO" id="GO:0005737">
    <property type="term" value="C:cytoplasm"/>
    <property type="evidence" value="ECO:0000314"/>
    <property type="project" value="UniProtKB"/>
</dbReference>
<dbReference type="GO" id="GO:0005829">
    <property type="term" value="C:cytosol"/>
    <property type="evidence" value="ECO:0000314"/>
    <property type="project" value="HPA"/>
</dbReference>
<dbReference type="GO" id="GO:0045171">
    <property type="term" value="C:intercellular bridge"/>
    <property type="evidence" value="ECO:0000314"/>
    <property type="project" value="HPA"/>
</dbReference>
<dbReference type="GO" id="GO:0043231">
    <property type="term" value="C:intracellular membrane-bounded organelle"/>
    <property type="evidence" value="ECO:0000314"/>
    <property type="project" value="HPA"/>
</dbReference>
<dbReference type="GO" id="GO:0072686">
    <property type="term" value="C:mitotic spindle"/>
    <property type="evidence" value="ECO:0000314"/>
    <property type="project" value="HPA"/>
</dbReference>
<dbReference type="GO" id="GO:0005654">
    <property type="term" value="C:nucleoplasm"/>
    <property type="evidence" value="ECO:0000314"/>
    <property type="project" value="HPA"/>
</dbReference>
<dbReference type="GO" id="GO:0005634">
    <property type="term" value="C:nucleus"/>
    <property type="evidence" value="ECO:0000314"/>
    <property type="project" value="UniProtKB"/>
</dbReference>
<dbReference type="GO" id="GO:0140083">
    <property type="term" value="F:ATP-dependent protein-DNA unloader activity"/>
    <property type="evidence" value="ECO:0000315"/>
    <property type="project" value="UniProtKB"/>
</dbReference>
<dbReference type="GO" id="GO:0051301">
    <property type="term" value="P:cell division"/>
    <property type="evidence" value="ECO:0007669"/>
    <property type="project" value="UniProtKB-KW"/>
</dbReference>
<dbReference type="GO" id="GO:0000070">
    <property type="term" value="P:mitotic sister chromatid segregation"/>
    <property type="evidence" value="ECO:0000315"/>
    <property type="project" value="UniProtKB"/>
</dbReference>
<dbReference type="GO" id="GO:0035562">
    <property type="term" value="P:negative regulation of chromatin binding"/>
    <property type="evidence" value="ECO:0000315"/>
    <property type="project" value="UniProtKB"/>
</dbReference>
<dbReference type="GO" id="GO:0008156">
    <property type="term" value="P:negative regulation of DNA replication"/>
    <property type="evidence" value="ECO:0000315"/>
    <property type="project" value="UniProtKB"/>
</dbReference>
<dbReference type="GO" id="GO:0045875">
    <property type="term" value="P:negative regulation of sister chromatid cohesion"/>
    <property type="evidence" value="ECO:0000315"/>
    <property type="project" value="UniProtKB"/>
</dbReference>
<dbReference type="GO" id="GO:0071168">
    <property type="term" value="P:protein localization to chromatin"/>
    <property type="evidence" value="ECO:0000315"/>
    <property type="project" value="UniProtKB"/>
</dbReference>
<dbReference type="FunFam" id="1.25.10.10:FF:000085">
    <property type="entry name" value="Wings apart-like protein homolog"/>
    <property type="match status" value="1"/>
</dbReference>
<dbReference type="Gene3D" id="1.25.10.10">
    <property type="entry name" value="Leucine-rich Repeat Variant"/>
    <property type="match status" value="1"/>
</dbReference>
<dbReference type="InterPro" id="IPR011989">
    <property type="entry name" value="ARM-like"/>
</dbReference>
<dbReference type="InterPro" id="IPR016024">
    <property type="entry name" value="ARM-type_fold"/>
</dbReference>
<dbReference type="InterPro" id="IPR039874">
    <property type="entry name" value="WAPL"/>
</dbReference>
<dbReference type="InterPro" id="IPR022771">
    <property type="entry name" value="WAPL_C"/>
</dbReference>
<dbReference type="InterPro" id="IPR012502">
    <property type="entry name" value="WAPL_dom"/>
</dbReference>
<dbReference type="PANTHER" id="PTHR22100">
    <property type="entry name" value="WINGS APART-LIKE PROTEIN HOMOLOG"/>
    <property type="match status" value="1"/>
</dbReference>
<dbReference type="PANTHER" id="PTHR22100:SF13">
    <property type="entry name" value="WINGS APART-LIKE PROTEIN HOMOLOG"/>
    <property type="match status" value="1"/>
</dbReference>
<dbReference type="Pfam" id="PF07814">
    <property type="entry name" value="WAPL"/>
    <property type="match status" value="1"/>
</dbReference>
<dbReference type="SUPFAM" id="SSF48371">
    <property type="entry name" value="ARM repeat"/>
    <property type="match status" value="1"/>
</dbReference>
<dbReference type="PROSITE" id="PS51271">
    <property type="entry name" value="WAPL"/>
    <property type="match status" value="1"/>
</dbReference>
<gene>
    <name evidence="17" type="primary">WAPL</name>
    <name type="synonym">FOE</name>
    <name type="synonym">KIAA0261</name>
    <name type="synonym">WAPAL</name>
</gene>
<sequence length="1190" mass="132946">MTSRFGKTYSRKGGNGSSKFDEVFSNKRTTLSTKWGETTFMAKLGQKRPNFKPDIQEIPKKPKVEEESTGDPFGFDSDDESLPVSSKNLAQVKCSSYSESSEAAQLEEVTSVLEANSKISHVVVEDTVVSDKCFPLEDTLLGKEKSTNRIVEDDASISSCNKLITSDKVENFHEEHEKNSHHIHKNADDSTKKPNAETTVASEIKETNDTWNSQFGKRPESPSEISPIKGSVRTGLFEWDNDFEDIRSEDCILSLDSDPLLEMKDDDFKNRLENLNEAIEEDIVQSVLRPTNCRTYCRANKTKSSQGASNFDKLMDGTSQALAKANSESSKDGLNQAKKGGVSCGTSFRGTVGRTRDYTVLHPSCLSVCNVTIQDTMERSMDEFTASTPADLGEAGRLRKKADIATSKTTTRFRPSNTKSKKDVKLEFFGFEDHETGGDEGGSGSSNYKIKYFGFDDLSESEDDEDDDCQVERKTSKKRTKTAPSPSLQPPPESNDNSQDSQSGTNNAENLDFTEDLPGVPESVKKPINKQGDKSKENTRKIFSGPKRSPTKAVYNARHWNHPDSEELPGPPVVKPQSVTVRLSSKEPNQKDDGVFKAPAPPSKVIKTVTIPTQPYQDIVTALKCRREDKELYTVVQHVKHFNDVVEFGENQEFTDDIEYLLSGLKSTQPLNTRCLSVISLATKCAMPSFRMHLRAHGMVAMVFKTLDDSQHHQNLSLCTAALMYILSRDRLNMDLDRASLDLMIRLLELEQDASSAKLLNEKDMNKIKEKIRRLCETVHNKHLDLENITTGHLAMETLLSLTSKRAGDWFKEELRLLGGLDHIVDKVKECVDHLSRDEDEEKLVASLWGAERCLRVLESVTVHNPENQSYLIAYKDSQLIVSSAKALQHCEELIQQYNRAEDSICLADSKPLPHQNVTNHVGKAVEDCMRAIIGVLLNLTNDNEWGSTKTGEQDGLIGTALNCVLQVPKYLPQEQRFDIRVLGLGLLINLVEYSARNRHCLVNMETSCSFDSSICSGEGDDSLRIGGQVHAVQALVQLFLERERAAQLAESKTDELIKDAPTTQHDKSGEWQETSGEIQWVSTEKTDGTEEKHKKEEEDEELDLNKALQHAGKHMEDCIVASYTALLLGCLCQESPINVTTVREYLPEGDFSIMTEMLKKFLSFMNLTCAVGTTGQKSISRVIEYLEHC</sequence>
<feature type="chain" id="PRO_0000245232" description="Wings apart-like protein homolog">
    <location>
        <begin position="1"/>
        <end position="1190"/>
    </location>
</feature>
<feature type="domain" description="WAPL" evidence="2">
    <location>
        <begin position="626"/>
        <end position="1169"/>
    </location>
</feature>
<feature type="region of interest" description="Mediates interaction with the cohesin complex">
    <location>
        <begin position="1"/>
        <end position="659"/>
    </location>
</feature>
<feature type="region of interest" description="Disordered" evidence="3">
    <location>
        <begin position="1"/>
        <end position="23"/>
    </location>
</feature>
<feature type="region of interest" description="Disordered" evidence="3">
    <location>
        <begin position="46"/>
        <end position="82"/>
    </location>
</feature>
<feature type="region of interest" description="Disordered" evidence="3">
    <location>
        <begin position="459"/>
        <end position="553"/>
    </location>
</feature>
<feature type="coiled-coil region" evidence="1">
    <location>
        <begin position="260"/>
        <end position="286"/>
    </location>
</feature>
<feature type="coiled-coil region" evidence="1">
    <location>
        <begin position="749"/>
        <end position="782"/>
    </location>
</feature>
<feature type="short sequence motif" description="FGF motif 1">
    <location>
        <begin position="73"/>
        <end position="75"/>
    </location>
</feature>
<feature type="short sequence motif" description="FGF motif 2">
    <location>
        <begin position="429"/>
        <end position="431"/>
    </location>
</feature>
<feature type="short sequence motif" description="FGF motif 3">
    <location>
        <begin position="453"/>
        <end position="455"/>
    </location>
</feature>
<feature type="compositionally biased region" description="Basic and acidic residues" evidence="3">
    <location>
        <begin position="54"/>
        <end position="66"/>
    </location>
</feature>
<feature type="compositionally biased region" description="Acidic residues" evidence="3">
    <location>
        <begin position="459"/>
        <end position="469"/>
    </location>
</feature>
<feature type="compositionally biased region" description="Polar residues" evidence="3">
    <location>
        <begin position="494"/>
        <end position="509"/>
    </location>
</feature>
<feature type="compositionally biased region" description="Basic and acidic residues" evidence="3">
    <location>
        <begin position="531"/>
        <end position="540"/>
    </location>
</feature>
<feature type="modified residue" description="Phosphoserine" evidence="19 20 21 23 24 25 26 27">
    <location>
        <position position="77"/>
    </location>
</feature>
<feature type="modified residue" description="N6-acetyllysine" evidence="22">
    <location>
        <position position="168"/>
    </location>
</feature>
<feature type="modified residue" description="Phosphoserine" evidence="19 24 25 26 27">
    <location>
        <position position="221"/>
    </location>
</feature>
<feature type="modified residue" description="Phosphoserine" evidence="19 27">
    <location>
        <position position="223"/>
    </location>
</feature>
<feature type="modified residue" description="Phosphoserine" evidence="18 19 20 24 25 26">
    <location>
        <position position="226"/>
    </location>
</feature>
<feature type="modified residue" description="Phosphoserine" evidence="26">
    <location>
        <position position="347"/>
    </location>
</feature>
<feature type="modified residue" description="Phosphoserine" evidence="19 23 26">
    <location>
        <position position="380"/>
    </location>
</feature>
<feature type="modified residue" description="Phosphoserine" evidence="26">
    <location>
        <position position="443"/>
    </location>
</feature>
<feature type="modified residue" description="Phosphoserine" evidence="19">
    <location>
        <position position="459"/>
    </location>
</feature>
<feature type="modified residue" description="Phosphoserine" evidence="19">
    <location>
        <position position="461"/>
    </location>
</feature>
<feature type="modified residue" description="Phosphoserine" evidence="19">
    <location>
        <position position="904"/>
    </location>
</feature>
<feature type="splice variant" id="VSP_019649" description="In isoform 2." evidence="14">
    <original>M</original>
    <variation>MVQGPVQTPALTIHRRKRRRRRRRRPVAKAPARLRGEYETGVKM</variation>
    <location>
        <position position="1"/>
    </location>
</feature>
<feature type="splice variant" id="VSP_019650" description="In isoform 3." evidence="15">
    <original>M</original>
    <variation>MVQGPVQTPALTIHRRKRRRSCPPNRASYLPKAESLASLGSHLPALLSRARVPRPPAGRRERERRRRPVAKAPARLRGEYETGVKM</variation>
    <location>
        <position position="1"/>
    </location>
</feature>
<feature type="splice variant" id="VSP_019651" description="In isoform 2." evidence="14">
    <location>
        <begin position="510"/>
        <end position="515"/>
    </location>
</feature>
<feature type="sequence variant" id="VAR_026967" description="In dbSNP:rs10887621.">
    <original>V</original>
    <variation>I</variation>
    <location>
        <position position="124"/>
    </location>
</feature>
<feature type="sequence variant" id="VAR_082314" description="Found in a patient with cohesinopathy; uncertain significance; dbSNP:rs1564570621." evidence="13">
    <original>R</original>
    <variation>H</variation>
    <location>
        <position position="731"/>
    </location>
</feature>
<feature type="mutagenesis site" description="Loss of interaction with PDS5B; when associated with 429-E--E-431 and 453-E--E-455." evidence="8">
    <original>FGF</original>
    <variation>EGE</variation>
    <location>
        <begin position="73"/>
        <end position="75"/>
    </location>
</feature>
<feature type="mutagenesis site" description="Loss of interaction with PDS5B; when associated with 73-E--E-75 and 453-E--E-455." evidence="8">
    <original>FGF</original>
    <variation>EGE</variation>
    <location>
        <begin position="429"/>
        <end position="431"/>
    </location>
</feature>
<feature type="mutagenesis site" description="Loss of interaction with PDS5B; when associated with 73-E--E-75 and 429-E--E-431." evidence="8">
    <original>FGF</original>
    <variation>EGE</variation>
    <location>
        <begin position="453"/>
        <end position="455"/>
    </location>
</feature>
<feature type="mutagenesis site" description="Impaired sister chromatid cohesion and resolution." evidence="11">
    <original>VK</original>
    <variation>AE</variation>
    <location>
        <begin position="639"/>
        <end position="640"/>
    </location>
</feature>
<feature type="mutagenesis site" description="Impaired sister chromatid cohesion and resolution." evidence="11">
    <original>DD</original>
    <variation>KK</variation>
    <location>
        <begin position="656"/>
        <end position="657"/>
    </location>
</feature>
<feature type="mutagenesis site" description="No effect." evidence="11">
    <original>E</original>
    <variation>K</variation>
    <location>
        <position position="770"/>
    </location>
</feature>
<feature type="mutagenesis site" description="No effect." evidence="11">
    <original>E</original>
    <variation>K</variation>
    <location>
        <position position="777"/>
    </location>
</feature>
<feature type="mutagenesis site" description="No effect." evidence="11">
    <original>E</original>
    <variation>K</variation>
    <location>
        <position position="787"/>
    </location>
</feature>
<feature type="mutagenesis site" description="No effect." evidence="11">
    <original>T</original>
    <variation>A</variation>
    <location>
        <position position="790"/>
    </location>
</feature>
<feature type="mutagenesis site" description="Impaired sister chromatid cohesion and resolution; when associated with A-1120." evidence="11">
    <original>M</original>
    <variation>A</variation>
    <location>
        <position position="1116"/>
    </location>
</feature>
<feature type="mutagenesis site" description="Impaired sister chromatid cohesion and resolution; when associated with A-1116." evidence="11">
    <original>I</original>
    <variation>A</variation>
    <location>
        <position position="1120"/>
    </location>
</feature>
<feature type="helix" evidence="28">
    <location>
        <begin position="631"/>
        <end position="640"/>
    </location>
</feature>
<feature type="helix" evidence="28">
    <location>
        <begin position="652"/>
        <end position="664"/>
    </location>
</feature>
<feature type="helix" evidence="28">
    <location>
        <begin position="671"/>
        <end position="684"/>
    </location>
</feature>
<feature type="helix" evidence="28">
    <location>
        <begin position="688"/>
        <end position="696"/>
    </location>
</feature>
<feature type="helix" evidence="28">
    <location>
        <begin position="700"/>
        <end position="706"/>
    </location>
</feature>
<feature type="turn" evidence="28">
    <location>
        <begin position="707"/>
        <end position="709"/>
    </location>
</feature>
<feature type="helix" evidence="28">
    <location>
        <begin position="710"/>
        <end position="712"/>
    </location>
</feature>
<feature type="helix" evidence="28">
    <location>
        <begin position="714"/>
        <end position="727"/>
    </location>
</feature>
<feature type="turn" evidence="28">
    <location>
        <begin position="733"/>
        <end position="735"/>
    </location>
</feature>
<feature type="helix" evidence="28">
    <location>
        <begin position="738"/>
        <end position="749"/>
    </location>
</feature>
<feature type="helix" evidence="28">
    <location>
        <begin position="765"/>
        <end position="780"/>
    </location>
</feature>
<feature type="helix" evidence="28">
    <location>
        <begin position="786"/>
        <end position="788"/>
    </location>
</feature>
<feature type="helix" evidence="28">
    <location>
        <begin position="791"/>
        <end position="802"/>
    </location>
</feature>
<feature type="turn" evidence="28">
    <location>
        <begin position="805"/>
        <end position="807"/>
    </location>
</feature>
<feature type="helix" evidence="28">
    <location>
        <begin position="810"/>
        <end position="817"/>
    </location>
</feature>
<feature type="helix" evidence="28">
    <location>
        <begin position="820"/>
        <end position="836"/>
    </location>
</feature>
<feature type="helix" evidence="28">
    <location>
        <begin position="841"/>
        <end position="862"/>
    </location>
</feature>
<feature type="helix" evidence="28">
    <location>
        <begin position="866"/>
        <end position="897"/>
    </location>
</feature>
<feature type="strand" evidence="28">
    <location>
        <begin position="909"/>
        <end position="911"/>
    </location>
</feature>
<feature type="helix" evidence="28">
    <location>
        <begin position="917"/>
        <end position="941"/>
    </location>
</feature>
<feature type="helix" evidence="28">
    <location>
        <begin position="945"/>
        <end position="952"/>
    </location>
</feature>
<feature type="helix" evidence="28">
    <location>
        <begin position="957"/>
        <end position="966"/>
    </location>
</feature>
<feature type="helix" evidence="28">
    <location>
        <begin position="968"/>
        <end position="971"/>
    </location>
</feature>
<feature type="helix" evidence="28">
    <location>
        <begin position="974"/>
        <end position="976"/>
    </location>
</feature>
<feature type="helix" evidence="28">
    <location>
        <begin position="977"/>
        <end position="992"/>
    </location>
</feature>
<feature type="helix" evidence="28">
    <location>
        <begin position="996"/>
        <end position="1003"/>
    </location>
</feature>
<feature type="helix" evidence="28">
    <location>
        <begin position="1032"/>
        <end position="1058"/>
    </location>
</feature>
<feature type="helix" evidence="28">
    <location>
        <begin position="1107"/>
        <end position="1135"/>
    </location>
</feature>
<feature type="helix" evidence="28">
    <location>
        <begin position="1137"/>
        <end position="1146"/>
    </location>
</feature>
<feature type="helix" evidence="28">
    <location>
        <begin position="1148"/>
        <end position="1150"/>
    </location>
</feature>
<feature type="helix" evidence="28">
    <location>
        <begin position="1153"/>
        <end position="1169"/>
    </location>
</feature>
<feature type="helix" evidence="28">
    <location>
        <begin position="1174"/>
        <end position="1188"/>
    </location>
</feature>
<protein>
    <recommendedName>
        <fullName>Wings apart-like protein homolog</fullName>
    </recommendedName>
    <alternativeName>
        <fullName>Friend of EBNA2 protein</fullName>
    </alternativeName>
    <alternativeName>
        <fullName evidence="17">WAPL cohesin release factor</fullName>
    </alternativeName>
</protein>
<organism>
    <name type="scientific">Homo sapiens</name>
    <name type="common">Human</name>
    <dbReference type="NCBI Taxonomy" id="9606"/>
    <lineage>
        <taxon>Eukaryota</taxon>
        <taxon>Metazoa</taxon>
        <taxon>Chordata</taxon>
        <taxon>Craniata</taxon>
        <taxon>Vertebrata</taxon>
        <taxon>Euteleostomi</taxon>
        <taxon>Mammalia</taxon>
        <taxon>Eutheria</taxon>
        <taxon>Euarchontoglires</taxon>
        <taxon>Primates</taxon>
        <taxon>Haplorrhini</taxon>
        <taxon>Catarrhini</taxon>
        <taxon>Hominidae</taxon>
        <taxon>Homo</taxon>
    </lineage>
</organism>
<accession>Q7Z5K2</accession>
<accession>A7E2B5</accession>
<accession>Q5VSK5</accession>
<accession>Q8IX10</accession>
<accession>Q92549</accession>
<comment type="function">
    <text evidence="4 6 7 8 9 10 11 12">Regulator of sister chromatid cohesion in mitosis which negatively regulates cohesin association with chromatin (PubMed:26299517). Involved in both sister chromatid cohesion during interphase and sister-chromatid resolution during early stages of mitosis. Couples DNA replication to sister chromatid cohesion. Cohesion ensures that chromosome partitioning is accurate in both meiotic and mitotic cells and plays an important role in DNA repair.</text>
</comment>
<comment type="subunit">
    <text evidence="6 7 8 9 10 11">Interacts with the cohesin complex throughout the cell cycle; interacts with both chromatin-bound and soluble pools of the complex. Interacts with RAD21; the interaction is direct. Interacts with PDS5A; the interaction is direct, cohesin-dependent and competitive with CDCA5/SORORIN. Interacts (via FGF motifs) with PDS5B; the interaction is direct. Interacts with a SMC1 protein (SMC1A or SMC1B) and SMC3.</text>
</comment>
<comment type="subunit">
    <text evidence="5">(Microbial infection) Isoform 2 interacts with Epstein-Barr virus EBNA2.</text>
</comment>
<comment type="interaction">
    <interactant intactId="EBI-1022242">
        <id>Q7Z5K2</id>
    </interactant>
    <interactant intactId="EBI-1175604">
        <id>Q9NTI5</id>
        <label>PDS5B</label>
    </interactant>
    <organismsDiffer>false</organismsDiffer>
    <experiments>9</experiments>
</comment>
<comment type="interaction">
    <interactant intactId="EBI-1022242">
        <id>Q7Z5K2</id>
    </interactant>
    <interactant intactId="EBI-80739">
        <id>O60216</id>
        <label>RAD21</label>
    </interactant>
    <organismsDiffer>false</organismsDiffer>
    <experiments>18</experiments>
</comment>
<comment type="interaction">
    <interactant intactId="EBI-1022242">
        <id>Q7Z5K2</id>
    </interactant>
    <interactant intactId="EBI-1057252">
        <id>Q8N3U4</id>
        <label>STAG2</label>
    </interactant>
    <organismsDiffer>false</organismsDiffer>
    <experiments>14</experiments>
</comment>
<comment type="subcellular location">
    <molecule>Isoform 2</molecule>
    <subcellularLocation>
        <location>Nucleus</location>
    </subcellularLocation>
</comment>
<comment type="subcellular location">
    <subcellularLocation>
        <location>Nucleus</location>
    </subcellularLocation>
    <subcellularLocation>
        <location evidence="12">Chromosome</location>
    </subcellularLocation>
    <subcellularLocation>
        <location>Cytoplasm</location>
    </subcellularLocation>
    <text>Associates with chromatin through the cohesin complex during interphase. Released in the cytoplasm from nuclear envelope breakdown until anaphase, it reaccumulates in nucleus at telophase.</text>
</comment>
<comment type="alternative products">
    <event type="alternative splicing"/>
    <isoform>
        <id>Q7Z5K2-1</id>
        <name>1</name>
        <sequence type="displayed"/>
    </isoform>
    <isoform>
        <id>Q7Z5K2-2</id>
        <name>2</name>
        <sequence type="described" ref="VSP_019649 VSP_019651"/>
    </isoform>
    <isoform>
        <id>Q7Z5K2-3</id>
        <name>3</name>
        <sequence type="described" ref="VSP_019650"/>
    </isoform>
</comment>
<comment type="tissue specificity">
    <text evidence="4 5">Isoform 1 is highly expressed in uterine cervix tumor. Isoform 2 is widely expressed with a high level in skeletal muscle and heart.</text>
</comment>
<comment type="PTM">
    <text evidence="12">Deubiquitinated by USP37; leading to stabilization.</text>
</comment>
<comment type="similarity">
    <text evidence="16">Belongs to the WAPL family.</text>
</comment>
<comment type="sequence caution" evidence="16">
    <conflict type="erroneous initiation">
        <sequence resource="EMBL-CDS" id="BAA13391"/>
    </conflict>
    <text>Extended N-terminus.</text>
</comment>
<evidence type="ECO:0000255" key="1"/>
<evidence type="ECO:0000255" key="2">
    <source>
        <dbReference type="PROSITE-ProRule" id="PRU00603"/>
    </source>
</evidence>
<evidence type="ECO:0000256" key="3">
    <source>
        <dbReference type="SAM" id="MobiDB-lite"/>
    </source>
</evidence>
<evidence type="ECO:0000269" key="4">
    <source>
    </source>
</evidence>
<evidence type="ECO:0000269" key="5">
    <source>
    </source>
</evidence>
<evidence type="ECO:0000269" key="6">
    <source>
    </source>
</evidence>
<evidence type="ECO:0000269" key="7">
    <source>
    </source>
</evidence>
<evidence type="ECO:0000269" key="8">
    <source>
    </source>
</evidence>
<evidence type="ECO:0000269" key="9">
    <source>
    </source>
</evidence>
<evidence type="ECO:0000269" key="10">
    <source>
    </source>
</evidence>
<evidence type="ECO:0000269" key="11">
    <source>
    </source>
</evidence>
<evidence type="ECO:0000269" key="12">
    <source>
    </source>
</evidence>
<evidence type="ECO:0000269" key="13">
    <source>
    </source>
</evidence>
<evidence type="ECO:0000303" key="14">
    <source>
    </source>
</evidence>
<evidence type="ECO:0000303" key="15">
    <source>
    </source>
</evidence>
<evidence type="ECO:0000305" key="16"/>
<evidence type="ECO:0000312" key="17">
    <source>
        <dbReference type="HGNC" id="HGNC:23293"/>
    </source>
</evidence>
<evidence type="ECO:0007744" key="18">
    <source>
    </source>
</evidence>
<evidence type="ECO:0007744" key="19">
    <source>
    </source>
</evidence>
<evidence type="ECO:0007744" key="20">
    <source>
    </source>
</evidence>
<evidence type="ECO:0007744" key="21">
    <source>
    </source>
</evidence>
<evidence type="ECO:0007744" key="22">
    <source>
    </source>
</evidence>
<evidence type="ECO:0007744" key="23">
    <source>
    </source>
</evidence>
<evidence type="ECO:0007744" key="24">
    <source>
    </source>
</evidence>
<evidence type="ECO:0007744" key="25">
    <source>
    </source>
</evidence>
<evidence type="ECO:0007744" key="26">
    <source>
    </source>
</evidence>
<evidence type="ECO:0007744" key="27">
    <source>
    </source>
</evidence>
<evidence type="ECO:0007829" key="28">
    <source>
        <dbReference type="PDB" id="4K6J"/>
    </source>
</evidence>
<name>WAPL_HUMAN</name>